<evidence type="ECO:0000250" key="1">
    <source>
        <dbReference type="UniProtKB" id="O00203"/>
    </source>
</evidence>
<evidence type="ECO:0000256" key="2">
    <source>
        <dbReference type="SAM" id="MobiDB-lite"/>
    </source>
</evidence>
<evidence type="ECO:0000269" key="3">
    <source>
    </source>
</evidence>
<evidence type="ECO:0000269" key="4">
    <source>
    </source>
</evidence>
<evidence type="ECO:0000269" key="5">
    <source>
    </source>
</evidence>
<evidence type="ECO:0000305" key="6"/>
<evidence type="ECO:0007744" key="7">
    <source>
    </source>
</evidence>
<evidence type="ECO:0007744" key="8">
    <source>
    </source>
</evidence>
<evidence type="ECO:0007744" key="9">
    <source>
    </source>
</evidence>
<keyword id="KW-0968">Cytoplasmic vesicle</keyword>
<keyword id="KW-0333">Golgi apparatus</keyword>
<keyword id="KW-0472">Membrane</keyword>
<keyword id="KW-0597">Phosphoprotein</keyword>
<keyword id="KW-0653">Protein transport</keyword>
<keyword id="KW-1185">Reference proteome</keyword>
<keyword id="KW-0813">Transport</keyword>
<proteinExistence type="evidence at protein level"/>
<dbReference type="EMBL" id="AF103809">
    <property type="protein sequence ID" value="AAC78338.1"/>
    <property type="molecule type" value="mRNA"/>
</dbReference>
<dbReference type="EMBL" id="AF255589">
    <property type="protein sequence ID" value="AAG23622.1"/>
    <property type="molecule type" value="Genomic_DNA"/>
</dbReference>
<dbReference type="EMBL" id="AF255566">
    <property type="protein sequence ID" value="AAG23622.1"/>
    <property type="status" value="JOINED"/>
    <property type="molecule type" value="Genomic_DNA"/>
</dbReference>
<dbReference type="EMBL" id="AF255567">
    <property type="protein sequence ID" value="AAG23622.1"/>
    <property type="status" value="JOINED"/>
    <property type="molecule type" value="Genomic_DNA"/>
</dbReference>
<dbReference type="EMBL" id="AF255568">
    <property type="protein sequence ID" value="AAG23622.1"/>
    <property type="status" value="JOINED"/>
    <property type="molecule type" value="Genomic_DNA"/>
</dbReference>
<dbReference type="EMBL" id="AF255569">
    <property type="protein sequence ID" value="AAG23622.1"/>
    <property type="status" value="JOINED"/>
    <property type="molecule type" value="Genomic_DNA"/>
</dbReference>
<dbReference type="EMBL" id="AF255570">
    <property type="protein sequence ID" value="AAG23622.1"/>
    <property type="status" value="JOINED"/>
    <property type="molecule type" value="Genomic_DNA"/>
</dbReference>
<dbReference type="EMBL" id="AF255571">
    <property type="protein sequence ID" value="AAG23622.1"/>
    <property type="status" value="JOINED"/>
    <property type="molecule type" value="Genomic_DNA"/>
</dbReference>
<dbReference type="EMBL" id="AF255572">
    <property type="protein sequence ID" value="AAG23622.1"/>
    <property type="status" value="JOINED"/>
    <property type="molecule type" value="Genomic_DNA"/>
</dbReference>
<dbReference type="EMBL" id="AF255573">
    <property type="protein sequence ID" value="AAG23622.1"/>
    <property type="status" value="JOINED"/>
    <property type="molecule type" value="Genomic_DNA"/>
</dbReference>
<dbReference type="EMBL" id="AF255574">
    <property type="protein sequence ID" value="AAG23622.1"/>
    <property type="status" value="JOINED"/>
    <property type="molecule type" value="Genomic_DNA"/>
</dbReference>
<dbReference type="EMBL" id="AF255575">
    <property type="protein sequence ID" value="AAG23622.1"/>
    <property type="status" value="JOINED"/>
    <property type="molecule type" value="Genomic_DNA"/>
</dbReference>
<dbReference type="EMBL" id="AF255576">
    <property type="protein sequence ID" value="AAG23622.1"/>
    <property type="status" value="JOINED"/>
    <property type="molecule type" value="Genomic_DNA"/>
</dbReference>
<dbReference type="EMBL" id="AF255577">
    <property type="protein sequence ID" value="AAG23622.1"/>
    <property type="status" value="JOINED"/>
    <property type="molecule type" value="Genomic_DNA"/>
</dbReference>
<dbReference type="EMBL" id="AF255578">
    <property type="protein sequence ID" value="AAG23622.1"/>
    <property type="status" value="JOINED"/>
    <property type="molecule type" value="Genomic_DNA"/>
</dbReference>
<dbReference type="EMBL" id="AF255579">
    <property type="protein sequence ID" value="AAG23622.1"/>
    <property type="status" value="JOINED"/>
    <property type="molecule type" value="Genomic_DNA"/>
</dbReference>
<dbReference type="EMBL" id="AF255580">
    <property type="protein sequence ID" value="AAG23622.1"/>
    <property type="status" value="JOINED"/>
    <property type="molecule type" value="Genomic_DNA"/>
</dbReference>
<dbReference type="EMBL" id="AF255581">
    <property type="protein sequence ID" value="AAG23622.1"/>
    <property type="status" value="JOINED"/>
    <property type="molecule type" value="Genomic_DNA"/>
</dbReference>
<dbReference type="EMBL" id="AF255582">
    <property type="protein sequence ID" value="AAG23622.1"/>
    <property type="status" value="JOINED"/>
    <property type="molecule type" value="Genomic_DNA"/>
</dbReference>
<dbReference type="EMBL" id="AF255583">
    <property type="protein sequence ID" value="AAG23622.1"/>
    <property type="status" value="JOINED"/>
    <property type="molecule type" value="Genomic_DNA"/>
</dbReference>
<dbReference type="EMBL" id="AF255584">
    <property type="protein sequence ID" value="AAG23622.1"/>
    <property type="status" value="JOINED"/>
    <property type="molecule type" value="Genomic_DNA"/>
</dbReference>
<dbReference type="EMBL" id="AF255585">
    <property type="protein sequence ID" value="AAG23622.1"/>
    <property type="status" value="JOINED"/>
    <property type="molecule type" value="Genomic_DNA"/>
</dbReference>
<dbReference type="EMBL" id="AF255586">
    <property type="protein sequence ID" value="AAG23622.1"/>
    <property type="status" value="JOINED"/>
    <property type="molecule type" value="Genomic_DNA"/>
</dbReference>
<dbReference type="EMBL" id="AF255587">
    <property type="protein sequence ID" value="AAG23622.1"/>
    <property type="status" value="JOINED"/>
    <property type="molecule type" value="Genomic_DNA"/>
</dbReference>
<dbReference type="EMBL" id="AF255588">
    <property type="protein sequence ID" value="AAG23622.1"/>
    <property type="status" value="JOINED"/>
    <property type="molecule type" value="Genomic_DNA"/>
</dbReference>
<dbReference type="EMBL" id="AC122373">
    <property type="status" value="NOT_ANNOTATED_CDS"/>
    <property type="molecule type" value="Genomic_DNA"/>
</dbReference>
<dbReference type="EMBL" id="AC123043">
    <property type="status" value="NOT_ANNOTATED_CDS"/>
    <property type="molecule type" value="Genomic_DNA"/>
</dbReference>
<dbReference type="EMBL" id="BC015068">
    <property type="protein sequence ID" value="AAH15068.1"/>
    <property type="molecule type" value="mRNA"/>
</dbReference>
<dbReference type="CCDS" id="CCDS26693.1"/>
<dbReference type="PIR" id="T18295">
    <property type="entry name" value="T18295"/>
</dbReference>
<dbReference type="RefSeq" id="NP_033810.2">
    <property type="nucleotide sequence ID" value="NM_009680.3"/>
</dbReference>
<dbReference type="SMR" id="Q9Z1T1"/>
<dbReference type="BioGRID" id="198132">
    <property type="interactions" value="9"/>
</dbReference>
<dbReference type="ComplexPortal" id="CPX-5145">
    <property type="entry name" value="Ubiquitous AP-3 Adaptor complex, sigma3a variant"/>
</dbReference>
<dbReference type="ComplexPortal" id="CPX-5146">
    <property type="entry name" value="Ubiquitous AP-3 Adaptor complex, sigma3b variant"/>
</dbReference>
<dbReference type="CORUM" id="Q9Z1T1"/>
<dbReference type="DIP" id="DIP-49018N"/>
<dbReference type="FunCoup" id="Q9Z1T1">
    <property type="interactions" value="3283"/>
</dbReference>
<dbReference type="IntAct" id="Q9Z1T1">
    <property type="interactions" value="10"/>
</dbReference>
<dbReference type="MINT" id="Q9Z1T1"/>
<dbReference type="STRING" id="10090.ENSMUSP00000022196"/>
<dbReference type="GlyGen" id="Q9Z1T1">
    <property type="glycosylation" value="2 sites, 1 O-linked glycan (1 site)"/>
</dbReference>
<dbReference type="iPTMnet" id="Q9Z1T1"/>
<dbReference type="PhosphoSitePlus" id="Q9Z1T1"/>
<dbReference type="SwissPalm" id="Q9Z1T1"/>
<dbReference type="jPOST" id="Q9Z1T1"/>
<dbReference type="PaxDb" id="10090-ENSMUSP00000022196"/>
<dbReference type="PeptideAtlas" id="Q9Z1T1"/>
<dbReference type="ProteomicsDB" id="282132"/>
<dbReference type="Pumba" id="Q9Z1T1"/>
<dbReference type="Antibodypedia" id="24502">
    <property type="antibodies" value="145 antibodies from 30 providers"/>
</dbReference>
<dbReference type="DNASU" id="11774"/>
<dbReference type="Ensembl" id="ENSMUST00000022196.5">
    <property type="protein sequence ID" value="ENSMUSP00000022196.4"/>
    <property type="gene ID" value="ENSMUSG00000021686.7"/>
</dbReference>
<dbReference type="GeneID" id="11774"/>
<dbReference type="KEGG" id="mmu:11774"/>
<dbReference type="UCSC" id="uc007rlv.2">
    <property type="organism name" value="mouse"/>
</dbReference>
<dbReference type="AGR" id="MGI:1333879"/>
<dbReference type="CTD" id="8546"/>
<dbReference type="MGI" id="MGI:1333879">
    <property type="gene designation" value="Ap3b1"/>
</dbReference>
<dbReference type="VEuPathDB" id="HostDB:ENSMUSG00000021686"/>
<dbReference type="eggNOG" id="KOG1060">
    <property type="taxonomic scope" value="Eukaryota"/>
</dbReference>
<dbReference type="GeneTree" id="ENSGT00940000157603"/>
<dbReference type="HOGENOM" id="CLU_006320_3_1_1"/>
<dbReference type="InParanoid" id="Q9Z1T1"/>
<dbReference type="OMA" id="TFNPIDS"/>
<dbReference type="OrthoDB" id="302453at2759"/>
<dbReference type="PhylomeDB" id="Q9Z1T1"/>
<dbReference type="TreeFam" id="TF314605"/>
<dbReference type="Reactome" id="R-MMU-432722">
    <property type="pathway name" value="Golgi Associated Vesicle Biogenesis"/>
</dbReference>
<dbReference type="BioGRID-ORCS" id="11774">
    <property type="hits" value="5 hits in 80 CRISPR screens"/>
</dbReference>
<dbReference type="ChiTaRS" id="Ap3b1">
    <property type="organism name" value="mouse"/>
</dbReference>
<dbReference type="PRO" id="PR:Q9Z1T1"/>
<dbReference type="Proteomes" id="UP000000589">
    <property type="component" value="Chromosome 13"/>
</dbReference>
<dbReference type="RNAct" id="Q9Z1T1">
    <property type="molecule type" value="protein"/>
</dbReference>
<dbReference type="Bgee" id="ENSMUSG00000021686">
    <property type="expression patterns" value="Expressed in choroid plexus of fourth ventricle and 266 other cell types or tissues"/>
</dbReference>
<dbReference type="ExpressionAtlas" id="Q9Z1T1">
    <property type="expression patterns" value="baseline and differential"/>
</dbReference>
<dbReference type="GO" id="GO:0030123">
    <property type="term" value="C:AP-3 adaptor complex"/>
    <property type="evidence" value="ECO:0000303"/>
    <property type="project" value="ComplexPortal"/>
</dbReference>
<dbReference type="GO" id="GO:1904115">
    <property type="term" value="C:axon cytoplasm"/>
    <property type="evidence" value="ECO:0007669"/>
    <property type="project" value="GOC"/>
</dbReference>
<dbReference type="GO" id="GO:0030131">
    <property type="term" value="C:clathrin adaptor complex"/>
    <property type="evidence" value="ECO:0007669"/>
    <property type="project" value="InterPro"/>
</dbReference>
<dbReference type="GO" id="GO:0030665">
    <property type="term" value="C:clathrin-coated vesicle membrane"/>
    <property type="evidence" value="ECO:0007669"/>
    <property type="project" value="UniProtKB-SubCell"/>
</dbReference>
<dbReference type="GO" id="GO:0005769">
    <property type="term" value="C:early endosome"/>
    <property type="evidence" value="ECO:0000303"/>
    <property type="project" value="ComplexPortal"/>
</dbReference>
<dbReference type="GO" id="GO:1990742">
    <property type="term" value="C:microvesicle"/>
    <property type="evidence" value="ECO:0000314"/>
    <property type="project" value="MGI"/>
</dbReference>
<dbReference type="GO" id="GO:0005739">
    <property type="term" value="C:mitochondrion"/>
    <property type="evidence" value="ECO:0007669"/>
    <property type="project" value="GOC"/>
</dbReference>
<dbReference type="GO" id="GO:0005802">
    <property type="term" value="C:trans-Golgi network"/>
    <property type="evidence" value="ECO:0000304"/>
    <property type="project" value="MGI"/>
</dbReference>
<dbReference type="GO" id="GO:0030742">
    <property type="term" value="F:GTP-dependent protein binding"/>
    <property type="evidence" value="ECO:0007669"/>
    <property type="project" value="Ensembl"/>
</dbReference>
<dbReference type="GO" id="GO:0019903">
    <property type="term" value="F:protein phosphatase binding"/>
    <property type="evidence" value="ECO:0007669"/>
    <property type="project" value="Ensembl"/>
</dbReference>
<dbReference type="GO" id="GO:0008089">
    <property type="term" value="P:anterograde axonal transport"/>
    <property type="evidence" value="ECO:0000315"/>
    <property type="project" value="UniProtKB"/>
</dbReference>
<dbReference type="GO" id="GO:0048490">
    <property type="term" value="P:anterograde synaptic vesicle transport"/>
    <property type="evidence" value="ECO:0000315"/>
    <property type="project" value="UniProtKB"/>
</dbReference>
<dbReference type="GO" id="GO:0019882">
    <property type="term" value="P:antigen processing and presentation"/>
    <property type="evidence" value="ECO:0000315"/>
    <property type="project" value="MGI"/>
</dbReference>
<dbReference type="GO" id="GO:0048007">
    <property type="term" value="P:antigen processing and presentation, exogenous lipid antigen via MHC class Ib"/>
    <property type="evidence" value="ECO:0000315"/>
    <property type="project" value="MGI"/>
</dbReference>
<dbReference type="GO" id="GO:0007596">
    <property type="term" value="P:blood coagulation"/>
    <property type="evidence" value="ECO:0000315"/>
    <property type="project" value="MGI"/>
</dbReference>
<dbReference type="GO" id="GO:0000902">
    <property type="term" value="P:cell morphogenesis"/>
    <property type="evidence" value="ECO:0000316"/>
    <property type="project" value="MGI"/>
</dbReference>
<dbReference type="GO" id="GO:0035654">
    <property type="term" value="P:clathrin-coated vesicle cargo loading, AP-3-mediated"/>
    <property type="evidence" value="ECO:0000303"/>
    <property type="project" value="ComplexPortal"/>
</dbReference>
<dbReference type="GO" id="GO:0090152">
    <property type="term" value="P:establishment of protein localization to mitochondrial membrane involved in mitochondrial fission"/>
    <property type="evidence" value="ECO:0000315"/>
    <property type="project" value="MGI"/>
</dbReference>
<dbReference type="GO" id="GO:0030851">
    <property type="term" value="P:granulocyte differentiation"/>
    <property type="evidence" value="ECO:0000315"/>
    <property type="project" value="MGI"/>
</dbReference>
<dbReference type="GO" id="GO:0002244">
    <property type="term" value="P:hematopoietic progenitor cell differentiation"/>
    <property type="evidence" value="ECO:0000315"/>
    <property type="project" value="MGI"/>
</dbReference>
<dbReference type="GO" id="GO:0048872">
    <property type="term" value="P:homeostasis of number of cells"/>
    <property type="evidence" value="ECO:0000315"/>
    <property type="project" value="MGI"/>
</dbReference>
<dbReference type="GO" id="GO:0006954">
    <property type="term" value="P:inflammatory response"/>
    <property type="evidence" value="ECO:0000316"/>
    <property type="project" value="MGI"/>
</dbReference>
<dbReference type="GO" id="GO:0006886">
    <property type="term" value="P:intracellular protein transport"/>
    <property type="evidence" value="ECO:0000315"/>
    <property type="project" value="MGI"/>
</dbReference>
<dbReference type="GO" id="GO:0046907">
    <property type="term" value="P:intracellular transport"/>
    <property type="evidence" value="ECO:0000303"/>
    <property type="project" value="ComplexPortal"/>
</dbReference>
<dbReference type="GO" id="GO:0006882">
    <property type="term" value="P:intracellular zinc ion homeostasis"/>
    <property type="evidence" value="ECO:0000315"/>
    <property type="project" value="MGI"/>
</dbReference>
<dbReference type="GO" id="GO:0030324">
    <property type="term" value="P:lung development"/>
    <property type="evidence" value="ECO:0000316"/>
    <property type="project" value="MGI"/>
</dbReference>
<dbReference type="GO" id="GO:0060425">
    <property type="term" value="P:lung morphogenesis"/>
    <property type="evidence" value="ECO:0000316"/>
    <property type="project" value="MGI"/>
</dbReference>
<dbReference type="GO" id="GO:0007040">
    <property type="term" value="P:lysosome organization"/>
    <property type="evidence" value="ECO:0000315"/>
    <property type="project" value="MGI"/>
</dbReference>
<dbReference type="GO" id="GO:1903232">
    <property type="term" value="P:melanosome assembly"/>
    <property type="evidence" value="ECO:0000303"/>
    <property type="project" value="ComplexPortal"/>
</dbReference>
<dbReference type="GO" id="GO:0032438">
    <property type="term" value="P:melanosome organization"/>
    <property type="evidence" value="ECO:0000315"/>
    <property type="project" value="MGI"/>
</dbReference>
<dbReference type="GO" id="GO:0061024">
    <property type="term" value="P:membrane organization"/>
    <property type="evidence" value="ECO:0000315"/>
    <property type="project" value="MGI"/>
</dbReference>
<dbReference type="GO" id="GO:0042789">
    <property type="term" value="P:mRNA transcription by RNA polymerase II"/>
    <property type="evidence" value="ECO:0000315"/>
    <property type="project" value="MGI"/>
</dbReference>
<dbReference type="GO" id="GO:0043473">
    <property type="term" value="P:pigmentation"/>
    <property type="evidence" value="ECO:0000315"/>
    <property type="project" value="MGI"/>
</dbReference>
<dbReference type="GO" id="GO:0060155">
    <property type="term" value="P:platelet dense granule organization"/>
    <property type="evidence" value="ECO:0000315"/>
    <property type="project" value="MGI"/>
</dbReference>
<dbReference type="GO" id="GO:0051138">
    <property type="term" value="P:positive regulation of NK T cell differentiation"/>
    <property type="evidence" value="ECO:0000315"/>
    <property type="project" value="MGI"/>
</dbReference>
<dbReference type="GO" id="GO:0045944">
    <property type="term" value="P:positive regulation of transcription by RNA polymerase II"/>
    <property type="evidence" value="ECO:0000315"/>
    <property type="project" value="MGI"/>
</dbReference>
<dbReference type="GO" id="GO:0034394">
    <property type="term" value="P:protein localization to cell surface"/>
    <property type="evidence" value="ECO:0000315"/>
    <property type="project" value="MGI"/>
</dbReference>
<dbReference type="GO" id="GO:0036211">
    <property type="term" value="P:protein modification process"/>
    <property type="evidence" value="ECO:0000315"/>
    <property type="project" value="MGI"/>
</dbReference>
<dbReference type="GO" id="GO:0006605">
    <property type="term" value="P:protein targeting"/>
    <property type="evidence" value="ECO:0000315"/>
    <property type="project" value="MGI"/>
</dbReference>
<dbReference type="GO" id="GO:0006622">
    <property type="term" value="P:protein targeting to lysosome"/>
    <property type="evidence" value="ECO:0000315"/>
    <property type="project" value="MGI"/>
</dbReference>
<dbReference type="GO" id="GO:0003016">
    <property type="term" value="P:respiratory system process"/>
    <property type="evidence" value="ECO:0000316"/>
    <property type="project" value="MGI"/>
</dbReference>
<dbReference type="GO" id="GO:0007338">
    <property type="term" value="P:single fertilization"/>
    <property type="evidence" value="ECO:0000315"/>
    <property type="project" value="MGI"/>
</dbReference>
<dbReference type="GO" id="GO:0098773">
    <property type="term" value="P:skin epidermis development"/>
    <property type="evidence" value="ECO:0000315"/>
    <property type="project" value="MGI"/>
</dbReference>
<dbReference type="GO" id="GO:0007283">
    <property type="term" value="P:spermatogenesis"/>
    <property type="evidence" value="ECO:0000315"/>
    <property type="project" value="MGI"/>
</dbReference>
<dbReference type="GO" id="GO:0002224">
    <property type="term" value="P:toll-like receptor signaling pathway"/>
    <property type="evidence" value="ECO:0000315"/>
    <property type="project" value="MGI"/>
</dbReference>
<dbReference type="GO" id="GO:0016192">
    <property type="term" value="P:vesicle-mediated transport"/>
    <property type="evidence" value="ECO:0000304"/>
    <property type="project" value="MGI"/>
</dbReference>
<dbReference type="Gene3D" id="1.25.10.10">
    <property type="entry name" value="Leucine-rich Repeat Variant"/>
    <property type="match status" value="1"/>
</dbReference>
<dbReference type="InterPro" id="IPR026740">
    <property type="entry name" value="AP3_beta"/>
</dbReference>
<dbReference type="InterPro" id="IPR056314">
    <property type="entry name" value="AP3B1/2_C"/>
</dbReference>
<dbReference type="InterPro" id="IPR029394">
    <property type="entry name" value="AP3B1_Ser"/>
</dbReference>
<dbReference type="InterPro" id="IPR029390">
    <property type="entry name" value="AP3B_C"/>
</dbReference>
<dbReference type="InterPro" id="IPR026739">
    <property type="entry name" value="AP_beta"/>
</dbReference>
<dbReference type="InterPro" id="IPR011989">
    <property type="entry name" value="ARM-like"/>
</dbReference>
<dbReference type="InterPro" id="IPR016024">
    <property type="entry name" value="ARM-type_fold"/>
</dbReference>
<dbReference type="InterPro" id="IPR015151">
    <property type="entry name" value="B-adaptin_app_sub_C"/>
</dbReference>
<dbReference type="InterPro" id="IPR002553">
    <property type="entry name" value="Clathrin/coatomer_adapt-like_N"/>
</dbReference>
<dbReference type="PANTHER" id="PTHR11134">
    <property type="entry name" value="ADAPTOR COMPLEX SUBUNIT BETA FAMILY MEMBER"/>
    <property type="match status" value="1"/>
</dbReference>
<dbReference type="Pfam" id="PF01602">
    <property type="entry name" value="Adaptin_N"/>
    <property type="match status" value="1"/>
</dbReference>
<dbReference type="Pfam" id="PF14796">
    <property type="entry name" value="AP3B1_C"/>
    <property type="match status" value="1"/>
</dbReference>
<dbReference type="Pfam" id="PF24080">
    <property type="entry name" value="AP3B1_C_2"/>
    <property type="match status" value="1"/>
</dbReference>
<dbReference type="Pfam" id="PF14797">
    <property type="entry name" value="SEEEED"/>
    <property type="match status" value="1"/>
</dbReference>
<dbReference type="PIRSF" id="PIRSF037096">
    <property type="entry name" value="AP3_complex_beta"/>
    <property type="match status" value="1"/>
</dbReference>
<dbReference type="SMART" id="SM01355">
    <property type="entry name" value="AP3B1_C"/>
    <property type="match status" value="1"/>
</dbReference>
<dbReference type="SMART" id="SM01020">
    <property type="entry name" value="B2-adapt-app_C"/>
    <property type="match status" value="1"/>
</dbReference>
<dbReference type="SUPFAM" id="SSF48371">
    <property type="entry name" value="ARM repeat"/>
    <property type="match status" value="1"/>
</dbReference>
<gene>
    <name type="primary">Ap3b1</name>
</gene>
<feature type="chain" id="PRO_0000193747" description="AP-3 complex subunit beta-1">
    <location>
        <begin position="1"/>
        <end position="1105"/>
    </location>
</feature>
<feature type="region of interest" description="Disordered" evidence="2">
    <location>
        <begin position="1"/>
        <end position="26"/>
    </location>
</feature>
<feature type="region of interest" description="Disordered" evidence="2">
    <location>
        <begin position="271"/>
        <end position="292"/>
    </location>
</feature>
<feature type="region of interest" description="Disordered" evidence="2">
    <location>
        <begin position="668"/>
        <end position="824"/>
    </location>
</feature>
<feature type="compositionally biased region" description="Acidic residues" evidence="2">
    <location>
        <begin position="679"/>
        <end position="704"/>
    </location>
</feature>
<feature type="compositionally biased region" description="Low complexity" evidence="2">
    <location>
        <begin position="705"/>
        <end position="722"/>
    </location>
</feature>
<feature type="compositionally biased region" description="Low complexity" evidence="2">
    <location>
        <begin position="730"/>
        <end position="741"/>
    </location>
</feature>
<feature type="compositionally biased region" description="Basic residues" evidence="2">
    <location>
        <begin position="750"/>
        <end position="759"/>
    </location>
</feature>
<feature type="compositionally biased region" description="Basic and acidic residues" evidence="2">
    <location>
        <begin position="760"/>
        <end position="774"/>
    </location>
</feature>
<feature type="compositionally biased region" description="Low complexity" evidence="2">
    <location>
        <begin position="775"/>
        <end position="788"/>
    </location>
</feature>
<feature type="compositionally biased region" description="Acidic residues" evidence="2">
    <location>
        <begin position="789"/>
        <end position="799"/>
    </location>
</feature>
<feature type="compositionally biased region" description="Basic and acidic residues" evidence="2">
    <location>
        <begin position="811"/>
        <end position="824"/>
    </location>
</feature>
<feature type="modified residue" description="Phosphoserine" evidence="7 8 9">
    <location>
        <position position="276"/>
    </location>
</feature>
<feature type="modified residue" description="Phosphoserine" evidence="1">
    <location>
        <position position="610"/>
    </location>
</feature>
<feature type="modified residue" description="Phosphoserine" evidence="1">
    <location>
        <position position="761"/>
    </location>
</feature>
<feature type="modified residue" description="Phosphoserine" evidence="1">
    <location>
        <position position="763"/>
    </location>
</feature>
<feature type="sequence conflict" description="In Ref. 4; AAH15068." evidence="6" ref="4">
    <original>ESE</original>
    <variation>DS</variation>
    <location>
        <begin position="275"/>
        <end position="277"/>
    </location>
</feature>
<feature type="sequence conflict" description="In Ref. 1; AAC78338 and 2; AAG23622." evidence="6" ref="1 2">
    <original>VTDTCL</original>
    <variation>FTETCF</variation>
    <location>
        <begin position="439"/>
        <end position="444"/>
    </location>
</feature>
<feature type="sequence conflict" description="In Ref. 1; AAC78338 and 2; AAG23622." evidence="6" ref="1 2">
    <original>L</original>
    <variation>F</variation>
    <location>
        <position position="487"/>
    </location>
</feature>
<feature type="sequence conflict" description="In Ref. 4; AAH15068." evidence="6" ref="4">
    <original>D</original>
    <variation>DEE</variation>
    <location>
        <position position="691"/>
    </location>
</feature>
<feature type="sequence conflict" description="In Ref. 4; AAH15068." evidence="6" ref="4">
    <original>G</original>
    <variation>E</variation>
    <location>
        <position position="714"/>
    </location>
</feature>
<feature type="sequence conflict" description="In Ref. 4; AAH15068." evidence="6" ref="4">
    <original>T</original>
    <variation>TSN</variation>
    <location>
        <position position="724"/>
    </location>
</feature>
<feature type="sequence conflict" description="In Ref. 4; AAH15068." evidence="6" ref="4">
    <original>S</original>
    <variation>N</variation>
    <location>
        <position position="737"/>
    </location>
</feature>
<accession>Q9Z1T1</accession>
<accession>E9QQ08</accession>
<accession>Q91YR4</accession>
<reference key="1">
    <citation type="journal article" date="1999" name="Hum. Mol. Genet.">
        <title>The beta-3A subunit gene (Ap3b1) of the AP-3 adaptor complex is altered in the mouse hypopigmentation mutant pearl, a model for Hermansky-Pudlak syndrome and night blindness.</title>
        <authorList>
            <person name="Feng L."/>
            <person name="Seymour A.B."/>
            <person name="Jiang S.Y."/>
            <person name="To A."/>
            <person name="Peden A.A."/>
            <person name="Novak E.K."/>
            <person name="Zhen L."/>
            <person name="Rusiniak M.E."/>
            <person name="Eicher E.M."/>
            <person name="Robinson M.S."/>
            <person name="Gorin M.B."/>
            <person name="Swank R.T."/>
        </authorList>
    </citation>
    <scope>NUCLEOTIDE SEQUENCE [MRNA]</scope>
    <scope>TISSUE SPECIFICITY</scope>
    <scope>DISEASE</scope>
    <source>
        <strain>C3H/HeJ</strain>
    </source>
</reference>
<reference key="2">
    <citation type="journal article" date="2000" name="Genomics">
        <title>Genomic structure of the mouse ap3b1 gene in normal and pearl mice.</title>
        <authorList>
            <person name="Feng L."/>
            <person name="Rigatti B.W."/>
            <person name="Novak E.K."/>
            <person name="Gorin M.B."/>
            <person name="Swank R.T."/>
        </authorList>
    </citation>
    <scope>NUCLEOTIDE SEQUENCE [GENOMIC DNA]</scope>
    <source>
        <strain>129/Sv</strain>
    </source>
</reference>
<reference key="3">
    <citation type="journal article" date="2009" name="PLoS Biol.">
        <title>Lineage-specific biology revealed by a finished genome assembly of the mouse.</title>
        <authorList>
            <person name="Church D.M."/>
            <person name="Goodstadt L."/>
            <person name="Hillier L.W."/>
            <person name="Zody M.C."/>
            <person name="Goldstein S."/>
            <person name="She X."/>
            <person name="Bult C.J."/>
            <person name="Agarwala R."/>
            <person name="Cherry J.L."/>
            <person name="DiCuccio M."/>
            <person name="Hlavina W."/>
            <person name="Kapustin Y."/>
            <person name="Meric P."/>
            <person name="Maglott D."/>
            <person name="Birtle Z."/>
            <person name="Marques A.C."/>
            <person name="Graves T."/>
            <person name="Zhou S."/>
            <person name="Teague B."/>
            <person name="Potamousis K."/>
            <person name="Churas C."/>
            <person name="Place M."/>
            <person name="Herschleb J."/>
            <person name="Runnheim R."/>
            <person name="Forrest D."/>
            <person name="Amos-Landgraf J."/>
            <person name="Schwartz D.C."/>
            <person name="Cheng Z."/>
            <person name="Lindblad-Toh K."/>
            <person name="Eichler E.E."/>
            <person name="Ponting C.P."/>
        </authorList>
    </citation>
    <scope>NUCLEOTIDE SEQUENCE [LARGE SCALE GENOMIC DNA]</scope>
    <source>
        <strain>C57BL/6J</strain>
    </source>
</reference>
<reference key="4">
    <citation type="journal article" date="2004" name="Genome Res.">
        <title>The status, quality, and expansion of the NIH full-length cDNA project: the Mammalian Gene Collection (MGC).</title>
        <authorList>
            <consortium name="The MGC Project Team"/>
        </authorList>
    </citation>
    <scope>NUCLEOTIDE SEQUENCE [LARGE SCALE MRNA]</scope>
</reference>
<reference key="5">
    <citation type="journal article" date="2007" name="Proc. Natl. Acad. Sci. U.S.A.">
        <title>Large-scale phosphorylation analysis of mouse liver.</title>
        <authorList>
            <person name="Villen J."/>
            <person name="Beausoleil S.A."/>
            <person name="Gerber S.A."/>
            <person name="Gygi S.P."/>
        </authorList>
    </citation>
    <scope>PHOSPHORYLATION [LARGE SCALE ANALYSIS] AT SER-276</scope>
    <scope>IDENTIFICATION BY MASS SPECTROMETRY [LARGE SCALE ANALYSIS]</scope>
    <source>
        <tissue>Liver</tissue>
    </source>
</reference>
<reference key="6">
    <citation type="journal article" date="2009" name="Immunity">
        <title>The phagosomal proteome in interferon-gamma-activated macrophages.</title>
        <authorList>
            <person name="Trost M."/>
            <person name="English L."/>
            <person name="Lemieux S."/>
            <person name="Courcelles M."/>
            <person name="Desjardins M."/>
            <person name="Thibault P."/>
        </authorList>
    </citation>
    <scope>PHOSPHORYLATION [LARGE SCALE ANALYSIS] AT SER-276</scope>
    <scope>IDENTIFICATION BY MASS SPECTROMETRY [LARGE SCALE ANALYSIS]</scope>
</reference>
<reference key="7">
    <citation type="journal article" date="2010" name="Cell">
        <title>A tissue-specific atlas of mouse protein phosphorylation and expression.</title>
        <authorList>
            <person name="Huttlin E.L."/>
            <person name="Jedrychowski M.P."/>
            <person name="Elias J.E."/>
            <person name="Goswami T."/>
            <person name="Rad R."/>
            <person name="Beausoleil S.A."/>
            <person name="Villen J."/>
            <person name="Haas W."/>
            <person name="Sowa M.E."/>
            <person name="Gygi S.P."/>
        </authorList>
    </citation>
    <scope>PHOSPHORYLATION [LARGE SCALE ANALYSIS] AT SER-276</scope>
    <scope>IDENTIFICATION BY MASS SPECTROMETRY [LARGE SCALE ANALYSIS]</scope>
    <source>
        <tissue>Brain</tissue>
        <tissue>Brown adipose tissue</tissue>
        <tissue>Heart</tissue>
        <tissue>Kidney</tissue>
        <tissue>Liver</tissue>
        <tissue>Lung</tissue>
        <tissue>Pancreas</tissue>
        <tissue>Spleen</tissue>
        <tissue>Testis</tissue>
    </source>
</reference>
<reference key="8">
    <citation type="journal article" date="2011" name="Mol. Biol. Cell">
        <title>The schizophrenia susceptibility factor dysbindin and its associated complex sort cargoes from cell bodies to the synapse.</title>
        <authorList>
            <person name="Larimore J."/>
            <person name="Tornieri K."/>
            <person name="Ryder P.V."/>
            <person name="Gokhale A."/>
            <person name="Zlatic S.A."/>
            <person name="Craige B."/>
            <person name="Lee J.D."/>
            <person name="Talbot K."/>
            <person name="Pare J.F."/>
            <person name="Smith Y."/>
            <person name="Faundez V."/>
        </authorList>
    </citation>
    <scope>FUNCTION</scope>
    <scope>ASSOCIATION WITH THE BLOC-1 COMPLEX</scope>
</reference>
<reference key="9">
    <citation type="journal article" date="2007" name="Proc. Natl. Acad. Sci. U.S.A.">
        <title>Protein pyrophosphorylation by inositol pyrophosphates is a posttranslational event.</title>
        <authorList>
            <person name="Bhandari R."/>
            <person name="Saiardi A."/>
            <person name="Ahmadibeni Y."/>
            <person name="Snowman A.M."/>
            <person name="Resnick A.C."/>
            <person name="Kristiansen T.Z."/>
            <person name="Molina H."/>
            <person name="Pandey A."/>
            <person name="Werner J.K. Jr."/>
            <person name="Juluri K.R."/>
            <person name="Xu Y."/>
            <person name="Prestwich G.D."/>
            <person name="Parang K."/>
            <person name="Snyder S.H."/>
        </authorList>
    </citation>
    <scope>PYROPHOSPHORYLATION</scope>
</reference>
<organism>
    <name type="scientific">Mus musculus</name>
    <name type="common">Mouse</name>
    <dbReference type="NCBI Taxonomy" id="10090"/>
    <lineage>
        <taxon>Eukaryota</taxon>
        <taxon>Metazoa</taxon>
        <taxon>Chordata</taxon>
        <taxon>Craniata</taxon>
        <taxon>Vertebrata</taxon>
        <taxon>Euteleostomi</taxon>
        <taxon>Mammalia</taxon>
        <taxon>Eutheria</taxon>
        <taxon>Euarchontoglires</taxon>
        <taxon>Glires</taxon>
        <taxon>Rodentia</taxon>
        <taxon>Myomorpha</taxon>
        <taxon>Muroidea</taxon>
        <taxon>Muridae</taxon>
        <taxon>Murinae</taxon>
        <taxon>Mus</taxon>
        <taxon>Mus</taxon>
    </lineage>
</organism>
<protein>
    <recommendedName>
        <fullName>AP-3 complex subunit beta-1</fullName>
    </recommendedName>
    <alternativeName>
        <fullName>Adaptor protein complex AP-3 subunit beta-1</fullName>
    </alternativeName>
    <alternativeName>
        <fullName>Adaptor-related protein complex 3 subunit beta-1</fullName>
    </alternativeName>
    <alternativeName>
        <fullName>Beta-3A-adaptin</fullName>
    </alternativeName>
    <alternativeName>
        <fullName>Clathrin assembly protein complex 3 beta-1 large chain</fullName>
    </alternativeName>
</protein>
<sequence>MSSNSFAYNEQSGGGEAAELGQEATSTISPSGAFGLFSSDWKKNEDLKQMLESNKDSAKLDAMKRIVGMIAKGKNASELFPAVVKNVASKNIEIKKLVYVYLVRYAEEQQDLALLSISTFQRALKDPNQLIRASALRVLSSIRVPIIVPVMMLAIKEASADLSPYVRKNAAHAIQKLYSLDPEQKEMLIEVIEKLLKDKSTLVAGSVVMAFEEVCPDRIDLIHRNYRKLCNLLVDVEEWGQVVIIHMLTRYARTQFVSPWREDGGLEDNEKNFYESEEEEEEKEKSSRKKSYAMDPDHRLLIRNTKPLLQSRNAAVVMAVAQLYWHISPKSEAGVISKSLVRLLRSNREVQYIVLQNIATMSIERKGMFEPYLKSFYVRSTDPTMIKTLKLEILTNLANEANISTLLREFQTYVRSQDKQFAAATIQTIGRCATSISEVTDTCLNGLVCLLSNRDEIVVAESVVVIKKLLQMQPAQHGEIIRHMAKLLDSITVPVARASILWLIGENCERVPKIAPDVLRKMAKSFTSEDDLVKLQILNLAAKLYLTNSKQTKLLTQYILNLGKYDQNYDIRDRTRFIRQLIVPNEKSGALSKYAKKIFLAPKPAPLLESPFKDRDRFQLGTLSHTLNIKASGYLELSNWPEVAPDPSVRNVEVIESAKEWTPLGKTKKEKPMKKFYSESEEEEDEDEDEDEEEEEKEDEDENPSDSSSDSESGSGSESGDTGTEDSSEDSSSGQDSETGSQAEAERQKVAKRNSKTKRKSDSENREKKNENSKASESSSEESSSMEDSSSESESESGSDSEPAPRNVAPAKERKPQQERHPPSKDVFLLDLDDFNPVSTPVALPTPALSPSLIADLEGLNLSTSSSVINVSTPVFVPTKTHELLHRMHGKGLAAHYCFPRQPCIFSDKMVSVQITLTNTSDRKIENIHIGGKGLPVGMQMHAFHPIDSLEPKGSVTVSVGIDFCDSTQTASFQLCTKDDCFNVTLQPPVGELLSPVAMSEKDFKKEQGTLTGMNETSATLIAAPQNFTPSMILQKVVNVANLGAVPSSQDNVHRFAARTVHSGSLMLVTVELKEGSTAQLIINTEKTVIGSVLLRELKPVLSQG</sequence>
<name>AP3B1_MOUSE</name>
<comment type="function">
    <text evidence="4">Subunit of non-clathrin- and clathrin-associated adaptor protein complex 3 (AP-3) that plays a role in protein sorting in the late-Golgi/trans-Golgi network (TGN) and/or endosomes. The AP complexes mediate both the recruitment of clathrin to membranes and the recognition of sorting signals within the cytosolic tails of transmembrane cargo molecules. AP-3 appears to be involved in the sorting of a subset of transmembrane proteins targeted to lysosomes and lysosome-related organelles. In concert with the BLOC-1 complex, AP-3 is required to target cargos into vesicles assembled at cell bodies for delivery into neurites and nerve terminals.</text>
</comment>
<comment type="subunit">
    <text evidence="1 4">Adaptor protein complex 3 (AP-3) is a heterotetramer composed of two large adaptins (delta-type subunit AP3D1 and beta-type subunit AP3B1 or AP3B2), a medium adaptin (mu-type subunit AP3M1 or AP3M2) and a small adaptin (sigma-type subunit APS1 or AP3S2) (PubMed:21998198). AP-3 associates with the BLOC-1 complex (PubMed:21998198). Interacts with KIF3A; interaction is direct; interaction is impaired by pyrophosphorylation of AP3B1 (By similarity).</text>
</comment>
<comment type="subcellular location">
    <subcellularLocation>
        <location evidence="1">Cytoplasmic vesicle</location>
        <location evidence="1">Clathrin-coated vesicle membrane</location>
        <topology evidence="1">Peripheral membrane protein</topology>
        <orientation evidence="1">Cytoplasmic side</orientation>
    </subcellularLocation>
    <subcellularLocation>
        <location evidence="1">Golgi apparatus</location>
    </subcellularLocation>
    <text evidence="1">Component of the coat surrounding the cytoplasmic face of coated vesicles located at the Golgi complex.</text>
</comment>
<comment type="tissue specificity">
    <text evidence="5">Ubiquitously expressed.</text>
</comment>
<comment type="PTM">
    <text evidence="1">Phosphorylated on serine residues.</text>
</comment>
<comment type="PTM">
    <text evidence="1 3">Pyrophosphorylated by 5-diphosphoinositol pentakisphosphate (5-IP7) (PubMed:17873058). Pyrophosphorylation impairs interaction with KIF3A (By similarity). Serine pyrophosphorylation is achieved by Mg(2+)-dependent, but enzyme independent transfer of a beta-phosphate from a inositol pyrophosphate to a pre-phosphorylated serine residue (PubMed:17873058).</text>
</comment>
<comment type="disease">
    <text evidence="5">Defects in Ap3b1 are the cause of the autosomal recessive phenotype 'pearl' (pe). Pearl mice exhibit hypopigmentation, lysosomal secretion abnormalities, and platelet-dense granules with reduced levels of adenine nucleotides and serotonin. The changes in platelets lead to prolonged bleeding. Additionally, pearl mice exhibit reduced sensitivity in the dark-adapted state (PubMed:9931340).</text>
</comment>
<comment type="similarity">
    <text evidence="6">Belongs to the adaptor complexes large subunit family.</text>
</comment>